<dbReference type="EMBL" id="AE017226">
    <property type="protein sequence ID" value="AAS11847.1"/>
    <property type="molecule type" value="Genomic_DNA"/>
</dbReference>
<dbReference type="RefSeq" id="NP_971936.1">
    <property type="nucleotide sequence ID" value="NC_002967.9"/>
</dbReference>
<dbReference type="RefSeq" id="WP_002678882.1">
    <property type="nucleotide sequence ID" value="NC_002967.9"/>
</dbReference>
<dbReference type="SMR" id="Q73N26"/>
<dbReference type="STRING" id="243275.TDE_1330"/>
<dbReference type="PaxDb" id="243275-TDE_1330"/>
<dbReference type="GeneID" id="2741064"/>
<dbReference type="KEGG" id="tde:TDE_1330"/>
<dbReference type="PATRIC" id="fig|243275.7.peg.1278"/>
<dbReference type="eggNOG" id="COG1327">
    <property type="taxonomic scope" value="Bacteria"/>
</dbReference>
<dbReference type="HOGENOM" id="CLU_108412_0_0_12"/>
<dbReference type="OrthoDB" id="9807461at2"/>
<dbReference type="Proteomes" id="UP000008212">
    <property type="component" value="Chromosome"/>
</dbReference>
<dbReference type="GO" id="GO:0005524">
    <property type="term" value="F:ATP binding"/>
    <property type="evidence" value="ECO:0007669"/>
    <property type="project" value="UniProtKB-KW"/>
</dbReference>
<dbReference type="GO" id="GO:0003677">
    <property type="term" value="F:DNA binding"/>
    <property type="evidence" value="ECO:0007669"/>
    <property type="project" value="UniProtKB-KW"/>
</dbReference>
<dbReference type="GO" id="GO:0008270">
    <property type="term" value="F:zinc ion binding"/>
    <property type="evidence" value="ECO:0007669"/>
    <property type="project" value="UniProtKB-UniRule"/>
</dbReference>
<dbReference type="GO" id="GO:0045892">
    <property type="term" value="P:negative regulation of DNA-templated transcription"/>
    <property type="evidence" value="ECO:0007669"/>
    <property type="project" value="UniProtKB-UniRule"/>
</dbReference>
<dbReference type="HAMAP" id="MF_00440">
    <property type="entry name" value="NrdR"/>
    <property type="match status" value="1"/>
</dbReference>
<dbReference type="InterPro" id="IPR005144">
    <property type="entry name" value="ATP-cone_dom"/>
</dbReference>
<dbReference type="InterPro" id="IPR055173">
    <property type="entry name" value="NrdR-like_N"/>
</dbReference>
<dbReference type="InterPro" id="IPR003796">
    <property type="entry name" value="RNR_NrdR-like"/>
</dbReference>
<dbReference type="NCBIfam" id="TIGR00244">
    <property type="entry name" value="transcriptional regulator NrdR"/>
    <property type="match status" value="1"/>
</dbReference>
<dbReference type="PANTHER" id="PTHR30455">
    <property type="entry name" value="TRANSCRIPTIONAL REPRESSOR NRDR"/>
    <property type="match status" value="1"/>
</dbReference>
<dbReference type="PANTHER" id="PTHR30455:SF2">
    <property type="entry name" value="TRANSCRIPTIONAL REPRESSOR NRDR"/>
    <property type="match status" value="1"/>
</dbReference>
<dbReference type="Pfam" id="PF03477">
    <property type="entry name" value="ATP-cone"/>
    <property type="match status" value="1"/>
</dbReference>
<dbReference type="Pfam" id="PF22811">
    <property type="entry name" value="Zn_ribbon_NrdR"/>
    <property type="match status" value="1"/>
</dbReference>
<dbReference type="PROSITE" id="PS51161">
    <property type="entry name" value="ATP_CONE"/>
    <property type="match status" value="1"/>
</dbReference>
<comment type="function">
    <text evidence="1">Negatively regulates transcription of bacterial ribonucleotide reductase nrd genes and operons by binding to NrdR-boxes.</text>
</comment>
<comment type="cofactor">
    <cofactor evidence="1">
        <name>Zn(2+)</name>
        <dbReference type="ChEBI" id="CHEBI:29105"/>
    </cofactor>
    <text evidence="1">Binds 1 zinc ion.</text>
</comment>
<comment type="similarity">
    <text evidence="1">Belongs to the NrdR family.</text>
</comment>
<sequence length="151" mass="17621">MRCPHCGNCDDKVMESRTLAQGDCIRRRRECLACGYRFTSYEHIEEKPFMVIKKDGRREPFDRKKLEKGIERALEKRPVSLNSIENIVTEIEDQAVLNSGLNKEIETTVLGEMVLSHLYSIDKVAYIRFASVYKQFSNLDEFVNEVKKVRK</sequence>
<proteinExistence type="inferred from homology"/>
<gene>
    <name evidence="1" type="primary">nrdR</name>
    <name type="ordered locus">TDE_1330</name>
</gene>
<protein>
    <recommendedName>
        <fullName evidence="1">Transcriptional repressor NrdR</fullName>
    </recommendedName>
</protein>
<keyword id="KW-0067">ATP-binding</keyword>
<keyword id="KW-0238">DNA-binding</keyword>
<keyword id="KW-0479">Metal-binding</keyword>
<keyword id="KW-0547">Nucleotide-binding</keyword>
<keyword id="KW-1185">Reference proteome</keyword>
<keyword id="KW-0678">Repressor</keyword>
<keyword id="KW-0804">Transcription</keyword>
<keyword id="KW-0805">Transcription regulation</keyword>
<keyword id="KW-0862">Zinc</keyword>
<keyword id="KW-0863">Zinc-finger</keyword>
<organism>
    <name type="scientific">Treponema denticola (strain ATCC 35405 / DSM 14222 / CIP 103919 / JCM 8153 / KCTC 15104)</name>
    <dbReference type="NCBI Taxonomy" id="243275"/>
    <lineage>
        <taxon>Bacteria</taxon>
        <taxon>Pseudomonadati</taxon>
        <taxon>Spirochaetota</taxon>
        <taxon>Spirochaetia</taxon>
        <taxon>Spirochaetales</taxon>
        <taxon>Treponemataceae</taxon>
        <taxon>Treponema</taxon>
    </lineage>
</organism>
<feature type="chain" id="PRO_0000182374" description="Transcriptional repressor NrdR">
    <location>
        <begin position="1"/>
        <end position="151"/>
    </location>
</feature>
<feature type="domain" description="ATP-cone" evidence="1">
    <location>
        <begin position="49"/>
        <end position="141"/>
    </location>
</feature>
<feature type="zinc finger region" evidence="1">
    <location>
        <begin position="3"/>
        <end position="34"/>
    </location>
</feature>
<reference key="1">
    <citation type="journal article" date="2004" name="Proc. Natl. Acad. Sci. U.S.A.">
        <title>Comparison of the genome of the oral pathogen Treponema denticola with other spirochete genomes.</title>
        <authorList>
            <person name="Seshadri R."/>
            <person name="Myers G.S.A."/>
            <person name="Tettelin H."/>
            <person name="Eisen J.A."/>
            <person name="Heidelberg J.F."/>
            <person name="Dodson R.J."/>
            <person name="Davidsen T.M."/>
            <person name="DeBoy R.T."/>
            <person name="Fouts D.E."/>
            <person name="Haft D.H."/>
            <person name="Selengut J."/>
            <person name="Ren Q."/>
            <person name="Brinkac L.M."/>
            <person name="Madupu R."/>
            <person name="Kolonay J.F."/>
            <person name="Durkin S.A."/>
            <person name="Daugherty S.C."/>
            <person name="Shetty J."/>
            <person name="Shvartsbeyn A."/>
            <person name="Gebregeorgis E."/>
            <person name="Geer K."/>
            <person name="Tsegaye G."/>
            <person name="Malek J.A."/>
            <person name="Ayodeji B."/>
            <person name="Shatsman S."/>
            <person name="McLeod M.P."/>
            <person name="Smajs D."/>
            <person name="Howell J.K."/>
            <person name="Pal S."/>
            <person name="Amin A."/>
            <person name="Vashisth P."/>
            <person name="McNeill T.Z."/>
            <person name="Xiang Q."/>
            <person name="Sodergren E."/>
            <person name="Baca E."/>
            <person name="Weinstock G.M."/>
            <person name="Norris S.J."/>
            <person name="Fraser C.M."/>
            <person name="Paulsen I.T."/>
        </authorList>
    </citation>
    <scope>NUCLEOTIDE SEQUENCE [LARGE SCALE GENOMIC DNA]</scope>
    <source>
        <strain>ATCC 35405 / DSM 14222 / CIP 103919 / JCM 8153 / KCTC 15104</strain>
    </source>
</reference>
<accession>Q73N26</accession>
<name>NRDR_TREDE</name>
<evidence type="ECO:0000255" key="1">
    <source>
        <dbReference type="HAMAP-Rule" id="MF_00440"/>
    </source>
</evidence>